<reference key="1">
    <citation type="journal article" date="2007" name="PLoS ONE">
        <title>Paradoxical DNA repair and peroxide resistance gene conservation in Bacillus pumilus SAFR-032.</title>
        <authorList>
            <person name="Gioia J."/>
            <person name="Yerrapragada S."/>
            <person name="Qin X."/>
            <person name="Jiang H."/>
            <person name="Igboeli O.C."/>
            <person name="Muzny D."/>
            <person name="Dugan-Rocha S."/>
            <person name="Ding Y."/>
            <person name="Hawes A."/>
            <person name="Liu W."/>
            <person name="Perez L."/>
            <person name="Kovar C."/>
            <person name="Dinh H."/>
            <person name="Lee S."/>
            <person name="Nazareth L."/>
            <person name="Blyth P."/>
            <person name="Holder M."/>
            <person name="Buhay C."/>
            <person name="Tirumalai M.R."/>
            <person name="Liu Y."/>
            <person name="Dasgupta I."/>
            <person name="Bokhetache L."/>
            <person name="Fujita M."/>
            <person name="Karouia F."/>
            <person name="Eswara Moorthy P."/>
            <person name="Siefert J."/>
            <person name="Uzman A."/>
            <person name="Buzumbo P."/>
            <person name="Verma A."/>
            <person name="Zwiya H."/>
            <person name="McWilliams B.D."/>
            <person name="Olowu A."/>
            <person name="Clinkenbeard K.D."/>
            <person name="Newcombe D."/>
            <person name="Golebiewski L."/>
            <person name="Petrosino J.F."/>
            <person name="Nicholson W.L."/>
            <person name="Fox G.E."/>
            <person name="Venkateswaran K."/>
            <person name="Highlander S.K."/>
            <person name="Weinstock G.M."/>
        </authorList>
    </citation>
    <scope>NUCLEOTIDE SEQUENCE [LARGE SCALE GENOMIC DNA]</scope>
    <source>
        <strain>SAFR-032</strain>
    </source>
</reference>
<dbReference type="EC" id="2.7.1.48" evidence="1"/>
<dbReference type="EMBL" id="CP000813">
    <property type="protein sequence ID" value="ABV63035.1"/>
    <property type="molecule type" value="Genomic_DNA"/>
</dbReference>
<dbReference type="RefSeq" id="WP_012010707.1">
    <property type="nucleotide sequence ID" value="NC_009848.4"/>
</dbReference>
<dbReference type="SMR" id="A8FFL8"/>
<dbReference type="STRING" id="315750.BPUM_2369"/>
<dbReference type="GeneID" id="5621633"/>
<dbReference type="KEGG" id="bpu:BPUM_2369"/>
<dbReference type="eggNOG" id="COG0572">
    <property type="taxonomic scope" value="Bacteria"/>
</dbReference>
<dbReference type="HOGENOM" id="CLU_021278_1_2_9"/>
<dbReference type="OrthoDB" id="9777642at2"/>
<dbReference type="UniPathway" id="UPA00574">
    <property type="reaction ID" value="UER00637"/>
</dbReference>
<dbReference type="UniPathway" id="UPA00579">
    <property type="reaction ID" value="UER00640"/>
</dbReference>
<dbReference type="Proteomes" id="UP000001355">
    <property type="component" value="Chromosome"/>
</dbReference>
<dbReference type="GO" id="GO:0005737">
    <property type="term" value="C:cytoplasm"/>
    <property type="evidence" value="ECO:0007669"/>
    <property type="project" value="UniProtKB-SubCell"/>
</dbReference>
<dbReference type="GO" id="GO:0005524">
    <property type="term" value="F:ATP binding"/>
    <property type="evidence" value="ECO:0007669"/>
    <property type="project" value="UniProtKB-UniRule"/>
</dbReference>
<dbReference type="GO" id="GO:0043771">
    <property type="term" value="F:cytidine kinase activity"/>
    <property type="evidence" value="ECO:0007669"/>
    <property type="project" value="RHEA"/>
</dbReference>
<dbReference type="GO" id="GO:0004849">
    <property type="term" value="F:uridine kinase activity"/>
    <property type="evidence" value="ECO:0007669"/>
    <property type="project" value="UniProtKB-UniRule"/>
</dbReference>
<dbReference type="GO" id="GO:0044211">
    <property type="term" value="P:CTP salvage"/>
    <property type="evidence" value="ECO:0007669"/>
    <property type="project" value="UniProtKB-UniRule"/>
</dbReference>
<dbReference type="GO" id="GO:0044206">
    <property type="term" value="P:UMP salvage"/>
    <property type="evidence" value="ECO:0007669"/>
    <property type="project" value="UniProtKB-UniRule"/>
</dbReference>
<dbReference type="CDD" id="cd02023">
    <property type="entry name" value="UMPK"/>
    <property type="match status" value="1"/>
</dbReference>
<dbReference type="Gene3D" id="3.40.50.300">
    <property type="entry name" value="P-loop containing nucleotide triphosphate hydrolases"/>
    <property type="match status" value="1"/>
</dbReference>
<dbReference type="HAMAP" id="MF_00551">
    <property type="entry name" value="Uridine_kinase"/>
    <property type="match status" value="1"/>
</dbReference>
<dbReference type="InterPro" id="IPR027417">
    <property type="entry name" value="P-loop_NTPase"/>
</dbReference>
<dbReference type="InterPro" id="IPR006083">
    <property type="entry name" value="PRK/URK"/>
</dbReference>
<dbReference type="InterPro" id="IPR026008">
    <property type="entry name" value="Uridine_kinase"/>
</dbReference>
<dbReference type="InterPro" id="IPR000764">
    <property type="entry name" value="Uridine_kinase-like"/>
</dbReference>
<dbReference type="NCBIfam" id="NF004018">
    <property type="entry name" value="PRK05480.1"/>
    <property type="match status" value="1"/>
</dbReference>
<dbReference type="NCBIfam" id="TIGR00235">
    <property type="entry name" value="udk"/>
    <property type="match status" value="1"/>
</dbReference>
<dbReference type="PANTHER" id="PTHR10285">
    <property type="entry name" value="URIDINE KINASE"/>
    <property type="match status" value="1"/>
</dbReference>
<dbReference type="Pfam" id="PF00485">
    <property type="entry name" value="PRK"/>
    <property type="match status" value="1"/>
</dbReference>
<dbReference type="PRINTS" id="PR00988">
    <property type="entry name" value="URIDINKINASE"/>
</dbReference>
<dbReference type="SUPFAM" id="SSF52540">
    <property type="entry name" value="P-loop containing nucleoside triphosphate hydrolases"/>
    <property type="match status" value="1"/>
</dbReference>
<organism>
    <name type="scientific">Bacillus pumilus (strain SAFR-032)</name>
    <dbReference type="NCBI Taxonomy" id="315750"/>
    <lineage>
        <taxon>Bacteria</taxon>
        <taxon>Bacillati</taxon>
        <taxon>Bacillota</taxon>
        <taxon>Bacilli</taxon>
        <taxon>Bacillales</taxon>
        <taxon>Bacillaceae</taxon>
        <taxon>Bacillus</taxon>
    </lineage>
</organism>
<keyword id="KW-0067">ATP-binding</keyword>
<keyword id="KW-0963">Cytoplasm</keyword>
<keyword id="KW-0418">Kinase</keyword>
<keyword id="KW-0547">Nucleotide-binding</keyword>
<keyword id="KW-0808">Transferase</keyword>
<evidence type="ECO:0000255" key="1">
    <source>
        <dbReference type="HAMAP-Rule" id="MF_00551"/>
    </source>
</evidence>
<comment type="catalytic activity">
    <reaction evidence="1">
        <text>uridine + ATP = UMP + ADP + H(+)</text>
        <dbReference type="Rhea" id="RHEA:16825"/>
        <dbReference type="ChEBI" id="CHEBI:15378"/>
        <dbReference type="ChEBI" id="CHEBI:16704"/>
        <dbReference type="ChEBI" id="CHEBI:30616"/>
        <dbReference type="ChEBI" id="CHEBI:57865"/>
        <dbReference type="ChEBI" id="CHEBI:456216"/>
        <dbReference type="EC" id="2.7.1.48"/>
    </reaction>
</comment>
<comment type="catalytic activity">
    <reaction evidence="1">
        <text>cytidine + ATP = CMP + ADP + H(+)</text>
        <dbReference type="Rhea" id="RHEA:24674"/>
        <dbReference type="ChEBI" id="CHEBI:15378"/>
        <dbReference type="ChEBI" id="CHEBI:17562"/>
        <dbReference type="ChEBI" id="CHEBI:30616"/>
        <dbReference type="ChEBI" id="CHEBI:60377"/>
        <dbReference type="ChEBI" id="CHEBI:456216"/>
        <dbReference type="EC" id="2.7.1.48"/>
    </reaction>
</comment>
<comment type="pathway">
    <text evidence="1">Pyrimidine metabolism; CTP biosynthesis via salvage pathway; CTP from cytidine: step 1/3.</text>
</comment>
<comment type="pathway">
    <text evidence="1">Pyrimidine metabolism; UMP biosynthesis via salvage pathway; UMP from uridine: step 1/1.</text>
</comment>
<comment type="subcellular location">
    <subcellularLocation>
        <location evidence="1">Cytoplasm</location>
    </subcellularLocation>
</comment>
<comment type="similarity">
    <text evidence="1">Belongs to the uridine kinase family.</text>
</comment>
<sequence>MRSKPVVIGIAGGSGSGKTSVTNSIYEKFKGHSILMLQQDLYYKNQSHMPFEECLLTNYDHPLAFDNDLMFEHLEQLLRYESIEKPIYDFKLNTRSEETVHVEPKDVIIVEGIFALEDERLRDLMDIKLYVDTDADLRIIRRILRDTKERGRSIDSVIEQYVSVVRPMHNQFIEPTKRYADIIIPEGGQNHVAIDLMVTKIQTILQSRAE</sequence>
<protein>
    <recommendedName>
        <fullName evidence="1">Uridine kinase</fullName>
        <ecNumber evidence="1">2.7.1.48</ecNumber>
    </recommendedName>
    <alternativeName>
        <fullName evidence="1">Cytidine monophosphokinase</fullName>
    </alternativeName>
    <alternativeName>
        <fullName evidence="1">Uridine monophosphokinase</fullName>
    </alternativeName>
</protein>
<proteinExistence type="inferred from homology"/>
<gene>
    <name evidence="1" type="primary">udk</name>
    <name type="ordered locus">BPUM_2369</name>
</gene>
<accession>A8FFL8</accession>
<feature type="chain" id="PRO_1000061098" description="Uridine kinase">
    <location>
        <begin position="1"/>
        <end position="210"/>
    </location>
</feature>
<feature type="binding site" evidence="1">
    <location>
        <begin position="12"/>
        <end position="19"/>
    </location>
    <ligand>
        <name>ATP</name>
        <dbReference type="ChEBI" id="CHEBI:30616"/>
    </ligand>
</feature>
<name>URK_BACP2</name>